<comment type="function">
    <text evidence="1">The glycine cleavage system catalyzes the degradation of glycine.</text>
</comment>
<comment type="catalytic activity">
    <reaction evidence="1">
        <text>N(6)-[(R)-S(8)-aminomethyldihydrolipoyl]-L-lysyl-[protein] + (6S)-5,6,7,8-tetrahydrofolate = N(6)-[(R)-dihydrolipoyl]-L-lysyl-[protein] + (6R)-5,10-methylene-5,6,7,8-tetrahydrofolate + NH4(+)</text>
        <dbReference type="Rhea" id="RHEA:16945"/>
        <dbReference type="Rhea" id="RHEA-COMP:10475"/>
        <dbReference type="Rhea" id="RHEA-COMP:10492"/>
        <dbReference type="ChEBI" id="CHEBI:15636"/>
        <dbReference type="ChEBI" id="CHEBI:28938"/>
        <dbReference type="ChEBI" id="CHEBI:57453"/>
        <dbReference type="ChEBI" id="CHEBI:83100"/>
        <dbReference type="ChEBI" id="CHEBI:83143"/>
        <dbReference type="EC" id="2.1.2.10"/>
    </reaction>
</comment>
<comment type="subunit">
    <text evidence="1">The glycine cleavage system is composed of four proteins: P, T, L and H.</text>
</comment>
<comment type="similarity">
    <text evidence="1">Belongs to the GcvT family.</text>
</comment>
<accession>Q21NX7</accession>
<proteinExistence type="inferred from homology"/>
<protein>
    <recommendedName>
        <fullName evidence="1">Aminomethyltransferase</fullName>
        <ecNumber evidence="1">2.1.2.10</ecNumber>
    </recommendedName>
    <alternativeName>
        <fullName evidence="1">Glycine cleavage system T protein</fullName>
    </alternativeName>
</protein>
<feature type="chain" id="PRO_1000047694" description="Aminomethyltransferase">
    <location>
        <begin position="1"/>
        <end position="363"/>
    </location>
</feature>
<evidence type="ECO:0000255" key="1">
    <source>
        <dbReference type="HAMAP-Rule" id="MF_00259"/>
    </source>
</evidence>
<dbReference type="EC" id="2.1.2.10" evidence="1"/>
<dbReference type="EMBL" id="CP000282">
    <property type="protein sequence ID" value="ABD79602.1"/>
    <property type="molecule type" value="Genomic_DNA"/>
</dbReference>
<dbReference type="RefSeq" id="WP_011466826.1">
    <property type="nucleotide sequence ID" value="NC_007912.1"/>
</dbReference>
<dbReference type="SMR" id="Q21NX7"/>
<dbReference type="STRING" id="203122.Sde_0338"/>
<dbReference type="GeneID" id="98612040"/>
<dbReference type="KEGG" id="sde:Sde_0338"/>
<dbReference type="eggNOG" id="COG0404">
    <property type="taxonomic scope" value="Bacteria"/>
</dbReference>
<dbReference type="HOGENOM" id="CLU_007884_10_2_6"/>
<dbReference type="OrthoDB" id="9774591at2"/>
<dbReference type="Proteomes" id="UP000001947">
    <property type="component" value="Chromosome"/>
</dbReference>
<dbReference type="GO" id="GO:0005829">
    <property type="term" value="C:cytosol"/>
    <property type="evidence" value="ECO:0007669"/>
    <property type="project" value="TreeGrafter"/>
</dbReference>
<dbReference type="GO" id="GO:0005960">
    <property type="term" value="C:glycine cleavage complex"/>
    <property type="evidence" value="ECO:0007669"/>
    <property type="project" value="InterPro"/>
</dbReference>
<dbReference type="GO" id="GO:0004047">
    <property type="term" value="F:aminomethyltransferase activity"/>
    <property type="evidence" value="ECO:0007669"/>
    <property type="project" value="UniProtKB-UniRule"/>
</dbReference>
<dbReference type="GO" id="GO:0008483">
    <property type="term" value="F:transaminase activity"/>
    <property type="evidence" value="ECO:0007669"/>
    <property type="project" value="UniProtKB-KW"/>
</dbReference>
<dbReference type="GO" id="GO:0019464">
    <property type="term" value="P:glycine decarboxylation via glycine cleavage system"/>
    <property type="evidence" value="ECO:0007669"/>
    <property type="project" value="UniProtKB-UniRule"/>
</dbReference>
<dbReference type="FunFam" id="3.30.70.1400:FF:000001">
    <property type="entry name" value="Aminomethyltransferase"/>
    <property type="match status" value="1"/>
</dbReference>
<dbReference type="FunFam" id="4.10.1250.10:FF:000001">
    <property type="entry name" value="Aminomethyltransferase"/>
    <property type="match status" value="1"/>
</dbReference>
<dbReference type="Gene3D" id="2.40.30.110">
    <property type="entry name" value="Aminomethyltransferase beta-barrel domains"/>
    <property type="match status" value="1"/>
</dbReference>
<dbReference type="Gene3D" id="3.30.70.1400">
    <property type="entry name" value="Aminomethyltransferase beta-barrel domains"/>
    <property type="match status" value="1"/>
</dbReference>
<dbReference type="Gene3D" id="4.10.1250.10">
    <property type="entry name" value="Aminomethyltransferase fragment"/>
    <property type="match status" value="1"/>
</dbReference>
<dbReference type="Gene3D" id="3.30.1360.120">
    <property type="entry name" value="Probable tRNA modification gtpase trme, domain 1"/>
    <property type="match status" value="1"/>
</dbReference>
<dbReference type="HAMAP" id="MF_00259">
    <property type="entry name" value="GcvT"/>
    <property type="match status" value="1"/>
</dbReference>
<dbReference type="InterPro" id="IPR006223">
    <property type="entry name" value="GCS_T"/>
</dbReference>
<dbReference type="InterPro" id="IPR022903">
    <property type="entry name" value="GCS_T_bac"/>
</dbReference>
<dbReference type="InterPro" id="IPR013977">
    <property type="entry name" value="GCST_C"/>
</dbReference>
<dbReference type="InterPro" id="IPR006222">
    <property type="entry name" value="GCV_T_N"/>
</dbReference>
<dbReference type="InterPro" id="IPR028896">
    <property type="entry name" value="GcvT/YgfZ/DmdA"/>
</dbReference>
<dbReference type="InterPro" id="IPR029043">
    <property type="entry name" value="GcvT/YgfZ_C"/>
</dbReference>
<dbReference type="InterPro" id="IPR027266">
    <property type="entry name" value="TrmE/GcvT_dom1"/>
</dbReference>
<dbReference type="NCBIfam" id="TIGR00528">
    <property type="entry name" value="gcvT"/>
    <property type="match status" value="1"/>
</dbReference>
<dbReference type="NCBIfam" id="NF001567">
    <property type="entry name" value="PRK00389.1"/>
    <property type="match status" value="1"/>
</dbReference>
<dbReference type="PANTHER" id="PTHR43757">
    <property type="entry name" value="AMINOMETHYLTRANSFERASE"/>
    <property type="match status" value="1"/>
</dbReference>
<dbReference type="PANTHER" id="PTHR43757:SF2">
    <property type="entry name" value="AMINOMETHYLTRANSFERASE, MITOCHONDRIAL"/>
    <property type="match status" value="1"/>
</dbReference>
<dbReference type="Pfam" id="PF01571">
    <property type="entry name" value="GCV_T"/>
    <property type="match status" value="1"/>
</dbReference>
<dbReference type="Pfam" id="PF08669">
    <property type="entry name" value="GCV_T_C"/>
    <property type="match status" value="1"/>
</dbReference>
<dbReference type="PIRSF" id="PIRSF006487">
    <property type="entry name" value="GcvT"/>
    <property type="match status" value="1"/>
</dbReference>
<dbReference type="SUPFAM" id="SSF101790">
    <property type="entry name" value="Aminomethyltransferase beta-barrel domain"/>
    <property type="match status" value="1"/>
</dbReference>
<dbReference type="SUPFAM" id="SSF103025">
    <property type="entry name" value="Folate-binding domain"/>
    <property type="match status" value="1"/>
</dbReference>
<keyword id="KW-0032">Aminotransferase</keyword>
<keyword id="KW-1185">Reference proteome</keyword>
<keyword id="KW-0808">Transferase</keyword>
<gene>
    <name evidence="1" type="primary">gcvT</name>
    <name type="ordered locus">Sde_0338</name>
</gene>
<organism>
    <name type="scientific">Saccharophagus degradans (strain 2-40 / ATCC 43961 / DSM 17024)</name>
    <dbReference type="NCBI Taxonomy" id="203122"/>
    <lineage>
        <taxon>Bacteria</taxon>
        <taxon>Pseudomonadati</taxon>
        <taxon>Pseudomonadota</taxon>
        <taxon>Gammaproteobacteria</taxon>
        <taxon>Cellvibrionales</taxon>
        <taxon>Cellvibrionaceae</taxon>
        <taxon>Saccharophagus</taxon>
    </lineage>
</organism>
<sequence>MLNETVLAPLHREIGGKMVDFGGWDMPLHYGSQVEEHQKVRTDAGMFDVSHMTVVDVTGAGAKTFLQYVLANDVAKLTKNGKALYSGMLNHEGGVVDDLIVYLMEWGYRVVVNCATREKDLAWMVEHAKGFEVALNERDDLAMIAVQGPAAREKTAQILPELLTMDLDIFQGADVAALGDVTFFVARTGYTGEDGYEIMLPTSDADAFWRALMAVGVAPCGLGARDTLRLEAGMNLYGHEMDDNTSPLVANMAWTIAWQPEERNFIGREAISAEKAAGVTHKLVGLVLQDRGVLRAEQVVTCEGVEGEGVITSGTFSPTLSKSVALARVPVAFSGECTVAVRNKQLKALVVKPSFVRLGKALV</sequence>
<reference key="1">
    <citation type="journal article" date="2008" name="PLoS Genet.">
        <title>Complete genome sequence of the complex carbohydrate-degrading marine bacterium, Saccharophagus degradans strain 2-40 T.</title>
        <authorList>
            <person name="Weiner R.M."/>
            <person name="Taylor L.E. II"/>
            <person name="Henrissat B."/>
            <person name="Hauser L."/>
            <person name="Land M."/>
            <person name="Coutinho P.M."/>
            <person name="Rancurel C."/>
            <person name="Saunders E.H."/>
            <person name="Longmire A.G."/>
            <person name="Zhang H."/>
            <person name="Bayer E.A."/>
            <person name="Gilbert H.J."/>
            <person name="Larimer F."/>
            <person name="Zhulin I.B."/>
            <person name="Ekborg N.A."/>
            <person name="Lamed R."/>
            <person name="Richardson P.M."/>
            <person name="Borovok I."/>
            <person name="Hutcheson S."/>
        </authorList>
    </citation>
    <scope>NUCLEOTIDE SEQUENCE [LARGE SCALE GENOMIC DNA]</scope>
    <source>
        <strain>2-40 / ATCC 43961 / DSM 17024</strain>
    </source>
</reference>
<name>GCST_SACD2</name>